<protein>
    <recommendedName>
        <fullName evidence="7">ATP-dependent DNA helicase PIF4</fullName>
        <ecNumber evidence="2">5.6.2.3</ecNumber>
    </recommendedName>
    <alternativeName>
        <fullName evidence="8">DNA 5'-3' helicase PIF3</fullName>
    </alternativeName>
    <alternativeName>
        <fullName>DNA repair and recombination helicase PIF4</fullName>
    </alternativeName>
</protein>
<evidence type="ECO:0000250" key="1"/>
<evidence type="ECO:0000250" key="2">
    <source>
        <dbReference type="UniProtKB" id="Q384Y0"/>
    </source>
</evidence>
<evidence type="ECO:0000250" key="3">
    <source>
        <dbReference type="UniProtKB" id="Q9H611"/>
    </source>
</evidence>
<evidence type="ECO:0000255" key="4"/>
<evidence type="ECO:0000256" key="5">
    <source>
        <dbReference type="SAM" id="MobiDB-lite"/>
    </source>
</evidence>
<evidence type="ECO:0000269" key="6">
    <source>
    </source>
</evidence>
<evidence type="ECO:0000303" key="7">
    <source>
    </source>
</evidence>
<evidence type="ECO:0000305" key="8"/>
<evidence type="ECO:0000312" key="9">
    <source>
        <dbReference type="Proteomes" id="UP000008524"/>
    </source>
</evidence>
<feature type="transit peptide" description="Mitochondrion" evidence="4">
    <location>
        <begin position="1"/>
        <end position="84"/>
    </location>
</feature>
<feature type="chain" id="PRO_0000423750" description="ATP-dependent DNA helicase PIF4">
    <location>
        <begin position="85"/>
        <end position="819"/>
    </location>
</feature>
<feature type="DNA-binding region" evidence="4">
    <location>
        <begin position="734"/>
        <end position="754"/>
    </location>
</feature>
<feature type="region of interest" description="Disordered" evidence="5">
    <location>
        <begin position="76"/>
        <end position="101"/>
    </location>
</feature>
<feature type="binding site" evidence="4">
    <location>
        <begin position="126"/>
        <end position="133"/>
    </location>
    <ligand>
        <name>ATP</name>
        <dbReference type="ChEBI" id="CHEBI:30616"/>
    </ligand>
</feature>
<organism>
    <name type="scientific">Trypanosoma brucei brucei (strain 927/4 GUTat10.1)</name>
    <dbReference type="NCBI Taxonomy" id="185431"/>
    <lineage>
        <taxon>Eukaryota</taxon>
        <taxon>Discoba</taxon>
        <taxon>Euglenozoa</taxon>
        <taxon>Kinetoplastea</taxon>
        <taxon>Metakinetoplastina</taxon>
        <taxon>Trypanosomatida</taxon>
        <taxon>Trypanosomatidae</taxon>
        <taxon>Trypanosoma</taxon>
    </lineage>
</organism>
<accession>Q381V6</accession>
<reference key="1">
    <citation type="journal article" date="2005" name="Science">
        <title>The genome of the African trypanosome Trypanosoma brucei.</title>
        <authorList>
            <person name="Berriman M."/>
            <person name="Ghedin E."/>
            <person name="Hertz-Fowler C."/>
            <person name="Blandin G."/>
            <person name="Renauld H."/>
            <person name="Bartholomeu D.C."/>
            <person name="Lennard N.J."/>
            <person name="Caler E."/>
            <person name="Hamlin N.E."/>
            <person name="Haas B."/>
            <person name="Bohme U."/>
            <person name="Hannick L."/>
            <person name="Aslett M.A."/>
            <person name="Shallom J."/>
            <person name="Marcello L."/>
            <person name="Hou L."/>
            <person name="Wickstead B."/>
            <person name="Alsmark U.C.M."/>
            <person name="Arrowsmith C."/>
            <person name="Atkin R.J."/>
            <person name="Barron A.J."/>
            <person name="Bringaud F."/>
            <person name="Brooks K."/>
            <person name="Carrington M."/>
            <person name="Cherevach I."/>
            <person name="Chillingworth T.J."/>
            <person name="Churcher C."/>
            <person name="Clark L.N."/>
            <person name="Corton C.H."/>
            <person name="Cronin A."/>
            <person name="Davies R.M."/>
            <person name="Doggett J."/>
            <person name="Djikeng A."/>
            <person name="Feldblyum T."/>
            <person name="Field M.C."/>
            <person name="Fraser A."/>
            <person name="Goodhead I."/>
            <person name="Hance Z."/>
            <person name="Harper D."/>
            <person name="Harris B.R."/>
            <person name="Hauser H."/>
            <person name="Hostetler J."/>
            <person name="Ivens A."/>
            <person name="Jagels K."/>
            <person name="Johnson D."/>
            <person name="Johnson J."/>
            <person name="Jones K."/>
            <person name="Kerhornou A.X."/>
            <person name="Koo H."/>
            <person name="Larke N."/>
            <person name="Landfear S."/>
            <person name="Larkin C."/>
            <person name="Leech V."/>
            <person name="Line A."/>
            <person name="Lord A."/>
            <person name="Macleod A."/>
            <person name="Mooney P.J."/>
            <person name="Moule S."/>
            <person name="Martin D.M."/>
            <person name="Morgan G.W."/>
            <person name="Mungall K."/>
            <person name="Norbertczak H."/>
            <person name="Ormond D."/>
            <person name="Pai G."/>
            <person name="Peacock C.S."/>
            <person name="Peterson J."/>
            <person name="Quail M.A."/>
            <person name="Rabbinowitsch E."/>
            <person name="Rajandream M.A."/>
            <person name="Reitter C."/>
            <person name="Salzberg S.L."/>
            <person name="Sanders M."/>
            <person name="Schobel S."/>
            <person name="Sharp S."/>
            <person name="Simmonds M."/>
            <person name="Simpson A.J."/>
            <person name="Tallon L."/>
            <person name="Turner C.M."/>
            <person name="Tait A."/>
            <person name="Tivey A.R."/>
            <person name="Van Aken S."/>
            <person name="Walker D."/>
            <person name="Wanless D."/>
            <person name="Wang S."/>
            <person name="White B."/>
            <person name="White O."/>
            <person name="Whitehead S."/>
            <person name="Woodward J."/>
            <person name="Wortman J."/>
            <person name="Adams M.D."/>
            <person name="Embley T.M."/>
            <person name="Gull K."/>
            <person name="Ullu E."/>
            <person name="Barry J.D."/>
            <person name="Fairlamb A.H."/>
            <person name="Opperdoes F."/>
            <person name="Barrell B.G."/>
            <person name="Donelson J.E."/>
            <person name="Hall N."/>
            <person name="Fraser C.M."/>
            <person name="Melville S.E."/>
            <person name="El-Sayed N.M.A."/>
        </authorList>
    </citation>
    <scope>NUCLEOTIDE SEQUENCE [LARGE SCALE GENOMIC DNA]</scope>
    <source>
        <strain evidence="9">927/4 GUTat10.1</strain>
    </source>
</reference>
<reference key="2">
    <citation type="journal article" date="2009" name="Mol. Cell">
        <title>Trypanosomes have six mitochondrial DNA helicases with one controlling kinetoplast maxicircle replication.</title>
        <authorList>
            <person name="Liu B."/>
            <person name="Wang J."/>
            <person name="Yaffe N."/>
            <person name="Lindsay M.E."/>
            <person name="Zhao Z."/>
            <person name="Zick A."/>
            <person name="Shlomai J."/>
            <person name="Englund P.T."/>
        </authorList>
    </citation>
    <scope>SUBCELLULAR LOCATION</scope>
</reference>
<sequence>MLLNSTRTLLLTYGRLLFAPGREGRQSRLAKGVSAWTVAAEGEKGGQLSPAPESTSCCGAAEVNEIKERDTKTCRQASSAGHNDLGLQEKEKSSGDESAFSSLGLNEEKRRALTLVLDGAPLFIGGGAGVGKSYMIQSIVTALRAKDLDVVVTASTGIAALNIGGSTFHSTFGVRVTSVGNSETNESCAVSILRYSKSLLAKVDVIVVDEVSLLHARHLEGLDIAARGAPGRIPHLPFGGIQVILCGDFMQLMHSTENCTSQDGGGDAGNKIGYRGDETTENTAGQNRSDVSSTAAVTDQGHIMSAVKNICVGERQRTSSGLIFESPLFLTCLLHLQLCEVKRHGDTAFLNDLNKLRQGVLTRRMMRSALVNPEDPNAIQLYPTRRSVAAFNESKMLELDGEEHLFRSIVESAGLSGPKGHASPNSRGANNVDGCNDVVVLHFLEKMRSSRRWQREVKKFVGQICTRCGISGIATSVVAPPYSSRQPYLKVYVHFCVSKQYDCLYPVAKMKAEWERSYYGTTPESKSARRFFGRVLFEVKHKNSLSTFLRASLKQAYSKVIESDNVLQSKRLKVGCRVILLRNLSNEYVNGSTGTVIGFQPVNKSRHLFPKGIRTQLSRKVYASLSRRPVVSSDSSAGSSENSYGGNGKEQALDVVNYDDVIVPIVRMDADGKDVAIPWLSLPLPDLQDRVFCTARVVTMPLVPAYAFTVHKTQGLTLDHSILLDCKGFFPCNHIIYVAASRVKKFSQLRMINVSPRMVTVHPGALHFSSSLPNVAEAETKWKKWKELQRMVNNGKALSASNPSVLELALYCATWKHHK</sequence>
<dbReference type="EC" id="5.6.2.3" evidence="2"/>
<dbReference type="EMBL" id="CH464491">
    <property type="protein sequence ID" value="EAN80425.1"/>
    <property type="molecule type" value="Genomic_DNA"/>
</dbReference>
<dbReference type="RefSeq" id="XP_829537.1">
    <property type="nucleotide sequence ID" value="XM_824444.1"/>
</dbReference>
<dbReference type="STRING" id="185431.Q381V6"/>
<dbReference type="PaxDb" id="5691-EAN80425"/>
<dbReference type="GeneID" id="3665357"/>
<dbReference type="KEGG" id="tbr:Tb11.01.6420"/>
<dbReference type="VEuPathDB" id="TriTrypDB:Tb927.11.14790"/>
<dbReference type="eggNOG" id="KOG0987">
    <property type="taxonomic scope" value="Eukaryota"/>
</dbReference>
<dbReference type="InParanoid" id="Q381V6"/>
<dbReference type="OrthoDB" id="10050764at2759"/>
<dbReference type="Proteomes" id="UP000008524">
    <property type="component" value="Chromosome 11 Scaffold 1"/>
</dbReference>
<dbReference type="GO" id="GO:0005737">
    <property type="term" value="C:cytoplasm"/>
    <property type="evidence" value="ECO:0000314"/>
    <property type="project" value="GeneDB"/>
</dbReference>
<dbReference type="GO" id="GO:0020023">
    <property type="term" value="C:kinetoplast"/>
    <property type="evidence" value="ECO:0007669"/>
    <property type="project" value="UniProtKB-SubCell"/>
</dbReference>
<dbReference type="GO" id="GO:0005739">
    <property type="term" value="C:mitochondrion"/>
    <property type="evidence" value="ECO:0000314"/>
    <property type="project" value="GeneDB"/>
</dbReference>
<dbReference type="GO" id="GO:0031981">
    <property type="term" value="C:nuclear lumen"/>
    <property type="evidence" value="ECO:0000318"/>
    <property type="project" value="GO_Central"/>
</dbReference>
<dbReference type="GO" id="GO:0043139">
    <property type="term" value="F:5'-3' DNA helicase activity"/>
    <property type="evidence" value="ECO:0000318"/>
    <property type="project" value="GO_Central"/>
</dbReference>
<dbReference type="GO" id="GO:0005524">
    <property type="term" value="F:ATP binding"/>
    <property type="evidence" value="ECO:0000305"/>
    <property type="project" value="GeneDB"/>
</dbReference>
<dbReference type="GO" id="GO:0016887">
    <property type="term" value="F:ATP hydrolysis activity"/>
    <property type="evidence" value="ECO:0007669"/>
    <property type="project" value="RHEA"/>
</dbReference>
<dbReference type="GO" id="GO:0003677">
    <property type="term" value="F:DNA binding"/>
    <property type="evidence" value="ECO:0007669"/>
    <property type="project" value="UniProtKB-KW"/>
</dbReference>
<dbReference type="GO" id="GO:0000287">
    <property type="term" value="F:magnesium ion binding"/>
    <property type="evidence" value="ECO:0000305"/>
    <property type="project" value="GeneDB"/>
</dbReference>
<dbReference type="GO" id="GO:0051276">
    <property type="term" value="P:chromosome organization"/>
    <property type="evidence" value="ECO:0000247"/>
    <property type="project" value="GeneDB"/>
</dbReference>
<dbReference type="GO" id="GO:0006310">
    <property type="term" value="P:DNA recombination"/>
    <property type="evidence" value="ECO:0000247"/>
    <property type="project" value="GeneDB"/>
</dbReference>
<dbReference type="GO" id="GO:0006281">
    <property type="term" value="P:DNA repair"/>
    <property type="evidence" value="ECO:0007669"/>
    <property type="project" value="UniProtKB-KW"/>
</dbReference>
<dbReference type="GO" id="GO:0000723">
    <property type="term" value="P:telomere maintenance"/>
    <property type="evidence" value="ECO:0000247"/>
    <property type="project" value="GeneDB"/>
</dbReference>
<dbReference type="CDD" id="cd18037">
    <property type="entry name" value="DEXSc_Pif1_like"/>
    <property type="match status" value="1"/>
</dbReference>
<dbReference type="CDD" id="cd18809">
    <property type="entry name" value="SF1_C_RecD"/>
    <property type="match status" value="1"/>
</dbReference>
<dbReference type="Gene3D" id="3.40.50.300">
    <property type="entry name" value="P-loop containing nucleotide triphosphate hydrolases"/>
    <property type="match status" value="2"/>
</dbReference>
<dbReference type="InterPro" id="IPR010285">
    <property type="entry name" value="DNA_helicase_pif1-like_DEAD"/>
</dbReference>
<dbReference type="InterPro" id="IPR027417">
    <property type="entry name" value="P-loop_NTPase"/>
</dbReference>
<dbReference type="InterPro" id="IPR051055">
    <property type="entry name" value="PIF1_helicase"/>
</dbReference>
<dbReference type="PANTHER" id="PTHR47642">
    <property type="entry name" value="ATP-DEPENDENT DNA HELICASE"/>
    <property type="match status" value="1"/>
</dbReference>
<dbReference type="Pfam" id="PF05970">
    <property type="entry name" value="PIF1"/>
    <property type="match status" value="1"/>
</dbReference>
<dbReference type="SUPFAM" id="SSF52540">
    <property type="entry name" value="P-loop containing nucleoside triphosphate hydrolases"/>
    <property type="match status" value="2"/>
</dbReference>
<gene>
    <name evidence="7" type="primary">PIF4</name>
    <name type="ORF">Tb11.01.6420</name>
</gene>
<comment type="function">
    <text evidence="1">DNA-dependent ATPase and 5'-3' DNA helicase required for the maintenance of mitochondrial (kinetoplast) genome stability.</text>
</comment>
<comment type="catalytic activity">
    <reaction evidence="2">
        <text>Couples ATP hydrolysis with the unwinding of duplex DNA at the replication fork by translocating in the 5'-3' direction. This creates two antiparallel DNA single strands (ssDNA). The leading ssDNA polymer is the template for DNA polymerase III holoenzyme which synthesizes a continuous strand.</text>
        <dbReference type="EC" id="5.6.2.3"/>
    </reaction>
</comment>
<comment type="catalytic activity">
    <reaction evidence="2">
        <text>ATP + H2O = ADP + phosphate + H(+)</text>
        <dbReference type="Rhea" id="RHEA:13065"/>
        <dbReference type="ChEBI" id="CHEBI:15377"/>
        <dbReference type="ChEBI" id="CHEBI:15378"/>
        <dbReference type="ChEBI" id="CHEBI:30616"/>
        <dbReference type="ChEBI" id="CHEBI:43474"/>
        <dbReference type="ChEBI" id="CHEBI:456216"/>
        <dbReference type="EC" id="5.6.2.3"/>
    </reaction>
</comment>
<comment type="cofactor">
    <cofactor evidence="2">
        <name>Mg(2+)</name>
        <dbReference type="ChEBI" id="CHEBI:18420"/>
    </cofactor>
</comment>
<comment type="subunit">
    <text evidence="1 3">Monomer.</text>
</comment>
<comment type="subcellular location">
    <subcellularLocation>
        <location evidence="6">Mitochondrion matrix</location>
        <location evidence="6">Kinetoplast</location>
    </subcellularLocation>
    <text evidence="6">Localizes predominantly to the kDNA disk.</text>
</comment>
<comment type="similarity">
    <text evidence="8">Belongs to the helicase family. PIF1 subfamily.</text>
</comment>
<keyword id="KW-0067">ATP-binding</keyword>
<keyword id="KW-0227">DNA damage</keyword>
<keyword id="KW-0233">DNA recombination</keyword>
<keyword id="KW-0234">DNA repair</keyword>
<keyword id="KW-0238">DNA-binding</keyword>
<keyword id="KW-0347">Helicase</keyword>
<keyword id="KW-0378">Hydrolase</keyword>
<keyword id="KW-0413">Isomerase</keyword>
<keyword id="KW-0419">Kinetoplast</keyword>
<keyword id="KW-0496">Mitochondrion</keyword>
<keyword id="KW-0547">Nucleotide-binding</keyword>
<keyword id="KW-1185">Reference proteome</keyword>
<keyword id="KW-0809">Transit peptide</keyword>
<name>PIF4_TRYB2</name>
<proteinExistence type="inferred from homology"/>